<sequence>MSDISKASLPKAIFLMGPTASGKTALAIELRKILPVELISVDSALIYKGMDIGTAKPNAEELLAAPHRLLNIRDPSQAYSAADFRRDALAEMADITAAGRIPLLVGGTMLYFKALLEGLSPLPSADPEVRARIEQQAAEQGWESLHRQLQEVDPVAAARIHPNDPQRLSRALEVFFISGKTLTELTQTSGDALPYQVHQFAIAPASRELLHQRIEQRFHQMLASGFEAEVRALFARGDLHTDLPSIRCVGYRQMWSYLEGEISYDEMVYRGVCATRQLAKRQITWLRGWEGVHWLDSEKPEQARDEVLQVVGAIAG</sequence>
<keyword id="KW-0067">ATP-binding</keyword>
<keyword id="KW-0460">Magnesium</keyword>
<keyword id="KW-0547">Nucleotide-binding</keyword>
<keyword id="KW-0808">Transferase</keyword>
<keyword id="KW-0819">tRNA processing</keyword>
<dbReference type="EC" id="2.5.1.75" evidence="1"/>
<dbReference type="EMBL" id="CP000243">
    <property type="protein sequence ID" value="ABE10175.1"/>
    <property type="molecule type" value="Genomic_DNA"/>
</dbReference>
<dbReference type="RefSeq" id="WP_001280359.1">
    <property type="nucleotide sequence ID" value="NZ_CP064825.1"/>
</dbReference>
<dbReference type="SMR" id="Q1R389"/>
<dbReference type="KEGG" id="eci:UTI89_C4771"/>
<dbReference type="HOGENOM" id="CLU_032616_0_0_6"/>
<dbReference type="Proteomes" id="UP000001952">
    <property type="component" value="Chromosome"/>
</dbReference>
<dbReference type="GO" id="GO:0005524">
    <property type="term" value="F:ATP binding"/>
    <property type="evidence" value="ECO:0007669"/>
    <property type="project" value="UniProtKB-UniRule"/>
</dbReference>
<dbReference type="GO" id="GO:0052381">
    <property type="term" value="F:tRNA dimethylallyltransferase activity"/>
    <property type="evidence" value="ECO:0007669"/>
    <property type="project" value="UniProtKB-UniRule"/>
</dbReference>
<dbReference type="GO" id="GO:0006400">
    <property type="term" value="P:tRNA modification"/>
    <property type="evidence" value="ECO:0007669"/>
    <property type="project" value="TreeGrafter"/>
</dbReference>
<dbReference type="FunFam" id="1.10.20.140:FF:000001">
    <property type="entry name" value="tRNA dimethylallyltransferase"/>
    <property type="match status" value="1"/>
</dbReference>
<dbReference type="FunFam" id="1.10.287.890:FF:000001">
    <property type="entry name" value="tRNA dimethylallyltransferase"/>
    <property type="match status" value="1"/>
</dbReference>
<dbReference type="Gene3D" id="1.10.20.140">
    <property type="match status" value="1"/>
</dbReference>
<dbReference type="Gene3D" id="1.10.287.890">
    <property type="entry name" value="Crystal structure of tRNA isopentenylpyrophosphate transferase (bh2366) domain"/>
    <property type="match status" value="1"/>
</dbReference>
<dbReference type="Gene3D" id="3.40.50.300">
    <property type="entry name" value="P-loop containing nucleotide triphosphate hydrolases"/>
    <property type="match status" value="1"/>
</dbReference>
<dbReference type="HAMAP" id="MF_00185">
    <property type="entry name" value="IPP_trans"/>
    <property type="match status" value="1"/>
</dbReference>
<dbReference type="InterPro" id="IPR039657">
    <property type="entry name" value="Dimethylallyltransferase"/>
</dbReference>
<dbReference type="InterPro" id="IPR018022">
    <property type="entry name" value="IPT"/>
</dbReference>
<dbReference type="InterPro" id="IPR027417">
    <property type="entry name" value="P-loop_NTPase"/>
</dbReference>
<dbReference type="NCBIfam" id="TIGR00174">
    <property type="entry name" value="miaA"/>
    <property type="match status" value="1"/>
</dbReference>
<dbReference type="PANTHER" id="PTHR11088">
    <property type="entry name" value="TRNA DIMETHYLALLYLTRANSFERASE"/>
    <property type="match status" value="1"/>
</dbReference>
<dbReference type="PANTHER" id="PTHR11088:SF60">
    <property type="entry name" value="TRNA DIMETHYLALLYLTRANSFERASE"/>
    <property type="match status" value="1"/>
</dbReference>
<dbReference type="Pfam" id="PF01715">
    <property type="entry name" value="IPPT"/>
    <property type="match status" value="1"/>
</dbReference>
<dbReference type="SUPFAM" id="SSF52540">
    <property type="entry name" value="P-loop containing nucleoside triphosphate hydrolases"/>
    <property type="match status" value="1"/>
</dbReference>
<protein>
    <recommendedName>
        <fullName evidence="1">tRNA dimethylallyltransferase</fullName>
        <ecNumber evidence="1">2.5.1.75</ecNumber>
    </recommendedName>
    <alternativeName>
        <fullName evidence="1">Dimethylallyl diphosphate:tRNA dimethylallyltransferase</fullName>
        <shortName evidence="1">DMAPP:tRNA dimethylallyltransferase</shortName>
        <shortName evidence="1">DMATase</shortName>
    </alternativeName>
    <alternativeName>
        <fullName evidence="1">Isopentenyl-diphosphate:tRNA isopentenyltransferase</fullName>
        <shortName evidence="1">IPP transferase</shortName>
        <shortName evidence="1">IPPT</shortName>
        <shortName evidence="1">IPTase</shortName>
    </alternativeName>
</protein>
<accession>Q1R389</accession>
<reference key="1">
    <citation type="journal article" date="2006" name="Proc. Natl. Acad. Sci. U.S.A.">
        <title>Identification of genes subject to positive selection in uropathogenic strains of Escherichia coli: a comparative genomics approach.</title>
        <authorList>
            <person name="Chen S.L."/>
            <person name="Hung C.-S."/>
            <person name="Xu J."/>
            <person name="Reigstad C.S."/>
            <person name="Magrini V."/>
            <person name="Sabo A."/>
            <person name="Blasiar D."/>
            <person name="Bieri T."/>
            <person name="Meyer R.R."/>
            <person name="Ozersky P."/>
            <person name="Armstrong J.R."/>
            <person name="Fulton R.S."/>
            <person name="Latreille J.P."/>
            <person name="Spieth J."/>
            <person name="Hooton T.M."/>
            <person name="Mardis E.R."/>
            <person name="Hultgren S.J."/>
            <person name="Gordon J.I."/>
        </authorList>
    </citation>
    <scope>NUCLEOTIDE SEQUENCE [LARGE SCALE GENOMIC DNA]</scope>
    <source>
        <strain>UTI89 / UPEC</strain>
    </source>
</reference>
<name>MIAA_ECOUT</name>
<gene>
    <name evidence="1" type="primary">miaA</name>
    <name type="ordered locus">UTI89_C4771</name>
</gene>
<proteinExistence type="inferred from homology"/>
<organism>
    <name type="scientific">Escherichia coli (strain UTI89 / UPEC)</name>
    <dbReference type="NCBI Taxonomy" id="364106"/>
    <lineage>
        <taxon>Bacteria</taxon>
        <taxon>Pseudomonadati</taxon>
        <taxon>Pseudomonadota</taxon>
        <taxon>Gammaproteobacteria</taxon>
        <taxon>Enterobacterales</taxon>
        <taxon>Enterobacteriaceae</taxon>
        <taxon>Escherichia</taxon>
    </lineage>
</organism>
<feature type="chain" id="PRO_1000020596" description="tRNA dimethylallyltransferase">
    <location>
        <begin position="1"/>
        <end position="316"/>
    </location>
</feature>
<feature type="region of interest" description="Interaction with substrate tRNA" evidence="1">
    <location>
        <begin position="42"/>
        <end position="45"/>
    </location>
</feature>
<feature type="region of interest" description="Interaction with substrate tRNA" evidence="1">
    <location>
        <begin position="166"/>
        <end position="170"/>
    </location>
</feature>
<feature type="region of interest" description="Interaction with substrate tRNA" evidence="1">
    <location>
        <begin position="247"/>
        <end position="252"/>
    </location>
</feature>
<feature type="region of interest" description="Interaction with substrate tRNA" evidence="1">
    <location>
        <begin position="280"/>
        <end position="287"/>
    </location>
</feature>
<feature type="binding site" evidence="1">
    <location>
        <begin position="17"/>
        <end position="24"/>
    </location>
    <ligand>
        <name>ATP</name>
        <dbReference type="ChEBI" id="CHEBI:30616"/>
    </ligand>
</feature>
<feature type="binding site" evidence="1">
    <location>
        <begin position="19"/>
        <end position="24"/>
    </location>
    <ligand>
        <name>substrate</name>
    </ligand>
</feature>
<feature type="site" description="Interaction with substrate tRNA" evidence="1">
    <location>
        <position position="108"/>
    </location>
</feature>
<feature type="site" description="Interaction with substrate tRNA" evidence="1">
    <location>
        <position position="130"/>
    </location>
</feature>
<comment type="function">
    <text evidence="1">Catalyzes the transfer of a dimethylallyl group onto the adenine at position 37 in tRNAs that read codons beginning with uridine, leading to the formation of N6-(dimethylallyl)adenosine (i(6)A).</text>
</comment>
<comment type="catalytic activity">
    <reaction evidence="1">
        <text>adenosine(37) in tRNA + dimethylallyl diphosphate = N(6)-dimethylallyladenosine(37) in tRNA + diphosphate</text>
        <dbReference type="Rhea" id="RHEA:26482"/>
        <dbReference type="Rhea" id="RHEA-COMP:10162"/>
        <dbReference type="Rhea" id="RHEA-COMP:10375"/>
        <dbReference type="ChEBI" id="CHEBI:33019"/>
        <dbReference type="ChEBI" id="CHEBI:57623"/>
        <dbReference type="ChEBI" id="CHEBI:74411"/>
        <dbReference type="ChEBI" id="CHEBI:74415"/>
        <dbReference type="EC" id="2.5.1.75"/>
    </reaction>
</comment>
<comment type="cofactor">
    <cofactor evidence="1">
        <name>Mg(2+)</name>
        <dbReference type="ChEBI" id="CHEBI:18420"/>
    </cofactor>
</comment>
<comment type="subunit">
    <text evidence="1">Monomer.</text>
</comment>
<comment type="similarity">
    <text evidence="1">Belongs to the IPP transferase family.</text>
</comment>
<evidence type="ECO:0000255" key="1">
    <source>
        <dbReference type="HAMAP-Rule" id="MF_00185"/>
    </source>
</evidence>